<dbReference type="EMBL" id="M27965">
    <property type="protein sequence ID" value="AAA98160.1"/>
    <property type="molecule type" value="Genomic_DNA"/>
</dbReference>
<dbReference type="SMR" id="P20710"/>
<dbReference type="GO" id="GO:0003677">
    <property type="term" value="F:DNA binding"/>
    <property type="evidence" value="ECO:0007669"/>
    <property type="project" value="UniProtKB-KW"/>
</dbReference>
<dbReference type="GO" id="GO:0006310">
    <property type="term" value="P:DNA recombination"/>
    <property type="evidence" value="ECO:0007669"/>
    <property type="project" value="UniProtKB-KW"/>
</dbReference>
<dbReference type="GO" id="GO:0032359">
    <property type="term" value="P:provirus excision"/>
    <property type="evidence" value="ECO:0007669"/>
    <property type="project" value="UniProtKB-KW"/>
</dbReference>
<organism>
    <name type="scientific">Staphylococcus phage L54a</name>
    <name type="common">Bacteriophage L54a</name>
    <dbReference type="NCBI Taxonomy" id="10727"/>
    <lineage>
        <taxon>Viruses</taxon>
        <taxon>Duplodnaviria</taxon>
        <taxon>Heunggongvirae</taxon>
        <taxon>Uroviricota</taxon>
        <taxon>Caudoviricetes</taxon>
    </lineage>
</organism>
<reference key="1">
    <citation type="journal article" date="1989" name="J. Bacteriol.">
        <title>Nucleotide sequence and genetic characterization of staphylococcal bacteriophage L54a int and xis genes.</title>
        <authorList>
            <person name="Ye Z.-H."/>
            <person name="Lee C.Y."/>
        </authorList>
    </citation>
    <scope>NUCLEOTIDE SEQUENCE [GENOMIC DNA]</scope>
</reference>
<keyword id="KW-0233">DNA recombination</keyword>
<keyword id="KW-0238">DNA-binding</keyword>
<keyword id="KW-1250">Viral genome excision</keyword>
<accession>P20710</accession>
<protein>
    <recommendedName>
        <fullName>Excisionase</fullName>
    </recommendedName>
</protein>
<proteinExistence type="predicted"/>
<gene>
    <name type="primary">xis</name>
</gene>
<organismHost>
    <name type="scientific">Staphylococcus</name>
    <dbReference type="NCBI Taxonomy" id="1279"/>
</organismHost>
<name>VXIS_BPL54</name>
<sequence length="59" mass="7199">MCVKFTDAEIAYIKESVENYSSEFDIYDDEQELKLKIYEQIMLKIKSEYKDTYLFRLIN</sequence>
<comment type="function">
    <text>Excisionase and integrase are necessary for the excision of prophage from the host genome by site-specific recombination at the att site.</text>
</comment>
<feature type="chain" id="PRO_0000077713" description="Excisionase">
    <location>
        <begin position="1"/>
        <end position="59"/>
    </location>
</feature>